<protein>
    <recommendedName>
        <fullName evidence="1">Nucleotide-binding protein Lm4b_02443</fullName>
    </recommendedName>
</protein>
<evidence type="ECO:0000255" key="1">
    <source>
        <dbReference type="HAMAP-Rule" id="MF_00636"/>
    </source>
</evidence>
<keyword id="KW-0067">ATP-binding</keyword>
<keyword id="KW-0342">GTP-binding</keyword>
<keyword id="KW-0547">Nucleotide-binding</keyword>
<sequence>MASKQLKLVIITGMSGAGKTVAMQSLEDLGYFCVDNLPPSLLPKFWELMKESDKMDKIALVMDLRGREFFDSIEPALDELDNTNFITTKILFLEADDKVLVSRYKETRRHHPLEPNGSVLDGINAERELLSDLKGRSQLVINTSNMAPRELRERINNEFQTEDKDIFNVQLMSFGFKYGIPIDADLVFDVRFLPNPHYIDKMRPLTGLDEDVYEYVMKWPETQTFLDKLVDLLMFTLPFYKREGKTQLVIAIGCTGGQHRSVALTEFVGKAIQQKYETTISHRDMKRRKGR</sequence>
<accession>C1KYP1</accession>
<proteinExistence type="inferred from homology"/>
<feature type="chain" id="PRO_0000383260" description="Nucleotide-binding protein Lm4b_02443">
    <location>
        <begin position="1"/>
        <end position="291"/>
    </location>
</feature>
<feature type="binding site" evidence="1">
    <location>
        <begin position="13"/>
        <end position="20"/>
    </location>
    <ligand>
        <name>ATP</name>
        <dbReference type="ChEBI" id="CHEBI:30616"/>
    </ligand>
</feature>
<feature type="binding site" evidence="1">
    <location>
        <begin position="63"/>
        <end position="66"/>
    </location>
    <ligand>
        <name>GTP</name>
        <dbReference type="ChEBI" id="CHEBI:37565"/>
    </ligand>
</feature>
<reference key="1">
    <citation type="journal article" date="2012" name="BMC Genomics">
        <title>Comparative genomics and transcriptomics of lineages I, II, and III strains of Listeria monocytogenes.</title>
        <authorList>
            <person name="Hain T."/>
            <person name="Ghai R."/>
            <person name="Billion A."/>
            <person name="Kuenne C.T."/>
            <person name="Steinweg C."/>
            <person name="Izar B."/>
            <person name="Mohamed W."/>
            <person name="Mraheil M."/>
            <person name="Domann E."/>
            <person name="Schaffrath S."/>
            <person name="Karst U."/>
            <person name="Goesmann A."/>
            <person name="Oehm S."/>
            <person name="Puhler A."/>
            <person name="Merkl R."/>
            <person name="Vorwerk S."/>
            <person name="Glaser P."/>
            <person name="Garrido P."/>
            <person name="Rusniok C."/>
            <person name="Buchrieser C."/>
            <person name="Goebel W."/>
            <person name="Chakraborty T."/>
        </authorList>
    </citation>
    <scope>NUCLEOTIDE SEQUENCE [LARGE SCALE GENOMIC DNA]</scope>
    <source>
        <strain>CLIP80459</strain>
    </source>
</reference>
<gene>
    <name type="ordered locus">Lm4b_02443</name>
</gene>
<comment type="function">
    <text evidence="1">Displays ATPase and GTPase activities.</text>
</comment>
<comment type="similarity">
    <text evidence="1">Belongs to the RapZ-like family.</text>
</comment>
<organism>
    <name type="scientific">Listeria monocytogenes serotype 4b (strain CLIP80459)</name>
    <dbReference type="NCBI Taxonomy" id="568819"/>
    <lineage>
        <taxon>Bacteria</taxon>
        <taxon>Bacillati</taxon>
        <taxon>Bacillota</taxon>
        <taxon>Bacilli</taxon>
        <taxon>Bacillales</taxon>
        <taxon>Listeriaceae</taxon>
        <taxon>Listeria</taxon>
    </lineage>
</organism>
<name>Y2443_LISMC</name>
<dbReference type="EMBL" id="FM242711">
    <property type="protein sequence ID" value="CAS06198.1"/>
    <property type="molecule type" value="Genomic_DNA"/>
</dbReference>
<dbReference type="SMR" id="C1KYP1"/>
<dbReference type="KEGG" id="lmc:Lm4b_02443"/>
<dbReference type="HOGENOM" id="CLU_059558_0_0_9"/>
<dbReference type="GO" id="GO:0005524">
    <property type="term" value="F:ATP binding"/>
    <property type="evidence" value="ECO:0007669"/>
    <property type="project" value="UniProtKB-UniRule"/>
</dbReference>
<dbReference type="GO" id="GO:0005525">
    <property type="term" value="F:GTP binding"/>
    <property type="evidence" value="ECO:0007669"/>
    <property type="project" value="UniProtKB-UniRule"/>
</dbReference>
<dbReference type="Gene3D" id="3.40.50.300">
    <property type="entry name" value="P-loop containing nucleotide triphosphate hydrolases"/>
    <property type="match status" value="1"/>
</dbReference>
<dbReference type="HAMAP" id="MF_00636">
    <property type="entry name" value="RapZ_like"/>
    <property type="match status" value="1"/>
</dbReference>
<dbReference type="InterPro" id="IPR027417">
    <property type="entry name" value="P-loop_NTPase"/>
</dbReference>
<dbReference type="InterPro" id="IPR005337">
    <property type="entry name" value="RapZ-like"/>
</dbReference>
<dbReference type="InterPro" id="IPR053930">
    <property type="entry name" value="RapZ-like_N"/>
</dbReference>
<dbReference type="InterPro" id="IPR053931">
    <property type="entry name" value="RapZ_C"/>
</dbReference>
<dbReference type="NCBIfam" id="NF003828">
    <property type="entry name" value="PRK05416.1"/>
    <property type="match status" value="1"/>
</dbReference>
<dbReference type="PANTHER" id="PTHR30448">
    <property type="entry name" value="RNASE ADAPTER PROTEIN RAPZ"/>
    <property type="match status" value="1"/>
</dbReference>
<dbReference type="PANTHER" id="PTHR30448:SF0">
    <property type="entry name" value="RNASE ADAPTER PROTEIN RAPZ"/>
    <property type="match status" value="1"/>
</dbReference>
<dbReference type="Pfam" id="PF22740">
    <property type="entry name" value="PapZ_C"/>
    <property type="match status" value="1"/>
</dbReference>
<dbReference type="Pfam" id="PF03668">
    <property type="entry name" value="RapZ-like_N"/>
    <property type="match status" value="1"/>
</dbReference>
<dbReference type="PIRSF" id="PIRSF005052">
    <property type="entry name" value="P-loopkin"/>
    <property type="match status" value="1"/>
</dbReference>
<dbReference type="SUPFAM" id="SSF52540">
    <property type="entry name" value="P-loop containing nucleoside triphosphate hydrolases"/>
    <property type="match status" value="1"/>
</dbReference>